<keyword id="KW-0009">Actin-binding</keyword>
<keyword id="KW-1185">Reference proteome</keyword>
<proteinExistence type="evidence at transcript level"/>
<organism>
    <name type="scientific">Oryza sativa subsp. japonica</name>
    <name type="common">Rice</name>
    <dbReference type="NCBI Taxonomy" id="39947"/>
    <lineage>
        <taxon>Eukaryota</taxon>
        <taxon>Viridiplantae</taxon>
        <taxon>Streptophyta</taxon>
        <taxon>Embryophyta</taxon>
        <taxon>Tracheophyta</taxon>
        <taxon>Spermatophyta</taxon>
        <taxon>Magnoliopsida</taxon>
        <taxon>Liliopsida</taxon>
        <taxon>Poales</taxon>
        <taxon>Poaceae</taxon>
        <taxon>BOP clade</taxon>
        <taxon>Oryzoideae</taxon>
        <taxon>Oryzeae</taxon>
        <taxon>Oryzinae</taxon>
        <taxon>Oryza</taxon>
        <taxon>Oryza sativa</taxon>
    </lineage>
</organism>
<evidence type="ECO:0000250" key="1"/>
<evidence type="ECO:0000255" key="2">
    <source>
        <dbReference type="PROSITE-ProRule" id="PRU00599"/>
    </source>
</evidence>
<evidence type="ECO:0000305" key="3"/>
<dbReference type="EMBL" id="AP004037">
    <property type="protein sequence ID" value="BAD27692.1"/>
    <property type="molecule type" value="Genomic_DNA"/>
</dbReference>
<dbReference type="EMBL" id="AP008208">
    <property type="protein sequence ID" value="BAF09571.1"/>
    <property type="molecule type" value="Genomic_DNA"/>
</dbReference>
<dbReference type="EMBL" id="AP014958">
    <property type="protein sequence ID" value="BAS80160.1"/>
    <property type="molecule type" value="Genomic_DNA"/>
</dbReference>
<dbReference type="EMBL" id="AK069605">
    <property type="protein sequence ID" value="BAG91513.1"/>
    <property type="molecule type" value="mRNA"/>
</dbReference>
<dbReference type="SMR" id="Q6EUH7"/>
<dbReference type="FunCoup" id="Q6EUH7">
    <property type="interactions" value="2473"/>
</dbReference>
<dbReference type="STRING" id="39947.Q6EUH7"/>
<dbReference type="PaxDb" id="39947-Q6EUH7"/>
<dbReference type="EnsemblPlants" id="Os02t0663800-01">
    <property type="protein sequence ID" value="Os02t0663800-01"/>
    <property type="gene ID" value="Os02g0663800"/>
</dbReference>
<dbReference type="Gramene" id="Os02t0663800-01">
    <property type="protein sequence ID" value="Os02t0663800-01"/>
    <property type="gene ID" value="Os02g0663800"/>
</dbReference>
<dbReference type="KEGG" id="dosa:Os02g0663800"/>
<dbReference type="eggNOG" id="KOG1735">
    <property type="taxonomic scope" value="Eukaryota"/>
</dbReference>
<dbReference type="HOGENOM" id="CLU_094004_2_2_1"/>
<dbReference type="InParanoid" id="Q6EUH7"/>
<dbReference type="OMA" id="YAIYDME"/>
<dbReference type="Proteomes" id="UP000000763">
    <property type="component" value="Chromosome 2"/>
</dbReference>
<dbReference type="Proteomes" id="UP000059680">
    <property type="component" value="Chromosome 2"/>
</dbReference>
<dbReference type="GO" id="GO:0015629">
    <property type="term" value="C:actin cytoskeleton"/>
    <property type="evidence" value="ECO:0000318"/>
    <property type="project" value="GO_Central"/>
</dbReference>
<dbReference type="GO" id="GO:0005737">
    <property type="term" value="C:cytoplasm"/>
    <property type="evidence" value="ECO:0000318"/>
    <property type="project" value="GO_Central"/>
</dbReference>
<dbReference type="GO" id="GO:0051015">
    <property type="term" value="F:actin filament binding"/>
    <property type="evidence" value="ECO:0000318"/>
    <property type="project" value="GO_Central"/>
</dbReference>
<dbReference type="GO" id="GO:0030042">
    <property type="term" value="P:actin filament depolymerization"/>
    <property type="evidence" value="ECO:0000318"/>
    <property type="project" value="GO_Central"/>
</dbReference>
<dbReference type="CDD" id="cd11286">
    <property type="entry name" value="ADF_cofilin_like"/>
    <property type="match status" value="1"/>
</dbReference>
<dbReference type="FunFam" id="3.40.20.10:FF:000025">
    <property type="entry name" value="Actin-depolymerizing factor 2"/>
    <property type="match status" value="1"/>
</dbReference>
<dbReference type="Gene3D" id="3.40.20.10">
    <property type="entry name" value="Severin"/>
    <property type="match status" value="1"/>
</dbReference>
<dbReference type="InterPro" id="IPR002108">
    <property type="entry name" value="ADF-H"/>
</dbReference>
<dbReference type="InterPro" id="IPR029006">
    <property type="entry name" value="ADF-H/Gelsolin-like_dom_sf"/>
</dbReference>
<dbReference type="InterPro" id="IPR017904">
    <property type="entry name" value="ADF/Cofilin"/>
</dbReference>
<dbReference type="PANTHER" id="PTHR11913">
    <property type="entry name" value="COFILIN-RELATED"/>
    <property type="match status" value="1"/>
</dbReference>
<dbReference type="Pfam" id="PF00241">
    <property type="entry name" value="Cofilin_ADF"/>
    <property type="match status" value="1"/>
</dbReference>
<dbReference type="SMART" id="SM00102">
    <property type="entry name" value="ADF"/>
    <property type="match status" value="1"/>
</dbReference>
<dbReference type="SUPFAM" id="SSF55753">
    <property type="entry name" value="Actin depolymerizing proteins"/>
    <property type="match status" value="1"/>
</dbReference>
<dbReference type="PROSITE" id="PS51263">
    <property type="entry name" value="ADF_H"/>
    <property type="match status" value="1"/>
</dbReference>
<accession>Q6EUH7</accession>
<accession>B7EGL6</accession>
<gene>
    <name type="primary">ADF1</name>
    <name type="ordered locus">Os02g0663800</name>
    <name type="ordered locus">LOC_Os02g44470</name>
    <name type="ORF">OJ1001_D02.29</name>
</gene>
<name>ADF1_ORYSJ</name>
<feature type="chain" id="PRO_0000278104" description="Actin-depolymerizing factor 1">
    <location>
        <begin position="1"/>
        <end position="139"/>
    </location>
</feature>
<feature type="domain" description="ADF-H" evidence="2">
    <location>
        <begin position="5"/>
        <end position="139"/>
    </location>
</feature>
<comment type="function">
    <text evidence="1">Actin-depolymerizing protein. Severs actin filaments (F-actin) and binds to actin monomers (By similarity).</text>
</comment>
<comment type="similarity">
    <text evidence="3">Belongs to the actin-binding proteins ADF family.</text>
</comment>
<protein>
    <recommendedName>
        <fullName>Actin-depolymerizing factor 1</fullName>
        <shortName>ADF-1</shortName>
        <shortName>OsADF1</shortName>
    </recommendedName>
</protein>
<sequence>MSNSASGMAVCDECKLKFLELKAKRSFRFIVFKINEKVQQVVVDRLGQPGESYDDFTACLPADECRYAVFDFDFVTDENCQKSKIFFISWAPDTSRVRSKMLYASSKDRFKRELDGIQVELQATDPSEMSMDIVKSRAL</sequence>
<reference key="1">
    <citation type="journal article" date="2005" name="Nature">
        <title>The map-based sequence of the rice genome.</title>
        <authorList>
            <consortium name="International rice genome sequencing project (IRGSP)"/>
        </authorList>
    </citation>
    <scope>NUCLEOTIDE SEQUENCE [LARGE SCALE GENOMIC DNA]</scope>
    <source>
        <strain>cv. Nipponbare</strain>
    </source>
</reference>
<reference key="2">
    <citation type="journal article" date="2008" name="Nucleic Acids Res.">
        <title>The rice annotation project database (RAP-DB): 2008 update.</title>
        <authorList>
            <consortium name="The rice annotation project (RAP)"/>
        </authorList>
    </citation>
    <scope>GENOME REANNOTATION</scope>
    <source>
        <strain>cv. Nipponbare</strain>
    </source>
</reference>
<reference key="3">
    <citation type="journal article" date="2013" name="Rice">
        <title>Improvement of the Oryza sativa Nipponbare reference genome using next generation sequence and optical map data.</title>
        <authorList>
            <person name="Kawahara Y."/>
            <person name="de la Bastide M."/>
            <person name="Hamilton J.P."/>
            <person name="Kanamori H."/>
            <person name="McCombie W.R."/>
            <person name="Ouyang S."/>
            <person name="Schwartz D.C."/>
            <person name="Tanaka T."/>
            <person name="Wu J."/>
            <person name="Zhou S."/>
            <person name="Childs K.L."/>
            <person name="Davidson R.M."/>
            <person name="Lin H."/>
            <person name="Quesada-Ocampo L."/>
            <person name="Vaillancourt B."/>
            <person name="Sakai H."/>
            <person name="Lee S.S."/>
            <person name="Kim J."/>
            <person name="Numa H."/>
            <person name="Itoh T."/>
            <person name="Buell C.R."/>
            <person name="Matsumoto T."/>
        </authorList>
    </citation>
    <scope>GENOME REANNOTATION</scope>
    <source>
        <strain>cv. Nipponbare</strain>
    </source>
</reference>
<reference key="4">
    <citation type="journal article" date="2003" name="Science">
        <title>Collection, mapping, and annotation of over 28,000 cDNA clones from japonica rice.</title>
        <authorList>
            <consortium name="The rice full-length cDNA consortium"/>
        </authorList>
    </citation>
    <scope>NUCLEOTIDE SEQUENCE [LARGE SCALE MRNA]</scope>
    <source>
        <strain>cv. Nipponbare</strain>
    </source>
</reference>
<reference key="5">
    <citation type="journal article" date="2006" name="J. Plant Physiol.">
        <title>Comparative study of rice and Arabidopsis actin-depolymerizing factors gene families.</title>
        <authorList>
            <person name="Feng Y."/>
            <person name="Liu Q."/>
            <person name="Xue Q."/>
        </authorList>
    </citation>
    <scope>GENE FAMILY</scope>
</reference>